<gene>
    <name evidence="1" type="primary">efp</name>
    <name type="ordered locus">CbuK_0112</name>
</gene>
<dbReference type="EMBL" id="CP001020">
    <property type="protein sequence ID" value="ACJ19433.1"/>
    <property type="molecule type" value="Genomic_DNA"/>
</dbReference>
<dbReference type="RefSeq" id="WP_005770149.1">
    <property type="nucleotide sequence ID" value="NC_011528.1"/>
</dbReference>
<dbReference type="SMR" id="B6J9B6"/>
<dbReference type="KEGG" id="cbc:CbuK_0112"/>
<dbReference type="HOGENOM" id="CLU_074944_0_0_6"/>
<dbReference type="UniPathway" id="UPA00345"/>
<dbReference type="GO" id="GO:0005737">
    <property type="term" value="C:cytoplasm"/>
    <property type="evidence" value="ECO:0007669"/>
    <property type="project" value="UniProtKB-SubCell"/>
</dbReference>
<dbReference type="GO" id="GO:0003746">
    <property type="term" value="F:translation elongation factor activity"/>
    <property type="evidence" value="ECO:0007669"/>
    <property type="project" value="UniProtKB-UniRule"/>
</dbReference>
<dbReference type="GO" id="GO:0043043">
    <property type="term" value="P:peptide biosynthetic process"/>
    <property type="evidence" value="ECO:0007669"/>
    <property type="project" value="InterPro"/>
</dbReference>
<dbReference type="CDD" id="cd04470">
    <property type="entry name" value="S1_EF-P_repeat_1"/>
    <property type="match status" value="1"/>
</dbReference>
<dbReference type="CDD" id="cd05794">
    <property type="entry name" value="S1_EF-P_repeat_2"/>
    <property type="match status" value="1"/>
</dbReference>
<dbReference type="FunFam" id="2.30.30.30:FF:000003">
    <property type="entry name" value="Elongation factor P"/>
    <property type="match status" value="1"/>
</dbReference>
<dbReference type="FunFam" id="2.40.50.140:FF:000004">
    <property type="entry name" value="Elongation factor P"/>
    <property type="match status" value="1"/>
</dbReference>
<dbReference type="FunFam" id="2.40.50.140:FF:000009">
    <property type="entry name" value="Elongation factor P"/>
    <property type="match status" value="1"/>
</dbReference>
<dbReference type="Gene3D" id="2.30.30.30">
    <property type="match status" value="1"/>
</dbReference>
<dbReference type="Gene3D" id="2.40.50.140">
    <property type="entry name" value="Nucleic acid-binding proteins"/>
    <property type="match status" value="2"/>
</dbReference>
<dbReference type="HAMAP" id="MF_00141">
    <property type="entry name" value="EF_P"/>
    <property type="match status" value="1"/>
</dbReference>
<dbReference type="InterPro" id="IPR015365">
    <property type="entry name" value="Elong-fact-P_C"/>
</dbReference>
<dbReference type="InterPro" id="IPR012340">
    <property type="entry name" value="NA-bd_OB-fold"/>
</dbReference>
<dbReference type="InterPro" id="IPR014722">
    <property type="entry name" value="Rib_uL2_dom2"/>
</dbReference>
<dbReference type="InterPro" id="IPR020599">
    <property type="entry name" value="Transl_elong_fac_P/YeiP"/>
</dbReference>
<dbReference type="InterPro" id="IPR013185">
    <property type="entry name" value="Transl_elong_KOW-like"/>
</dbReference>
<dbReference type="InterPro" id="IPR001059">
    <property type="entry name" value="Transl_elong_P/YeiP_cen"/>
</dbReference>
<dbReference type="InterPro" id="IPR013852">
    <property type="entry name" value="Transl_elong_P/YeiP_CS"/>
</dbReference>
<dbReference type="InterPro" id="IPR011768">
    <property type="entry name" value="Transl_elongation_fac_P"/>
</dbReference>
<dbReference type="InterPro" id="IPR008991">
    <property type="entry name" value="Translation_prot_SH3-like_sf"/>
</dbReference>
<dbReference type="NCBIfam" id="TIGR00038">
    <property type="entry name" value="efp"/>
    <property type="match status" value="1"/>
</dbReference>
<dbReference type="NCBIfam" id="NF001810">
    <property type="entry name" value="PRK00529.1"/>
    <property type="match status" value="1"/>
</dbReference>
<dbReference type="PANTHER" id="PTHR30053">
    <property type="entry name" value="ELONGATION FACTOR P"/>
    <property type="match status" value="1"/>
</dbReference>
<dbReference type="PANTHER" id="PTHR30053:SF12">
    <property type="entry name" value="ELONGATION FACTOR P (EF-P) FAMILY PROTEIN"/>
    <property type="match status" value="1"/>
</dbReference>
<dbReference type="Pfam" id="PF01132">
    <property type="entry name" value="EFP"/>
    <property type="match status" value="1"/>
</dbReference>
<dbReference type="Pfam" id="PF08207">
    <property type="entry name" value="EFP_N"/>
    <property type="match status" value="1"/>
</dbReference>
<dbReference type="Pfam" id="PF09285">
    <property type="entry name" value="Elong-fact-P_C"/>
    <property type="match status" value="1"/>
</dbReference>
<dbReference type="PIRSF" id="PIRSF005901">
    <property type="entry name" value="EF-P"/>
    <property type="match status" value="1"/>
</dbReference>
<dbReference type="SMART" id="SM01185">
    <property type="entry name" value="EFP"/>
    <property type="match status" value="1"/>
</dbReference>
<dbReference type="SMART" id="SM00841">
    <property type="entry name" value="Elong-fact-P_C"/>
    <property type="match status" value="1"/>
</dbReference>
<dbReference type="SUPFAM" id="SSF50249">
    <property type="entry name" value="Nucleic acid-binding proteins"/>
    <property type="match status" value="2"/>
</dbReference>
<dbReference type="SUPFAM" id="SSF50104">
    <property type="entry name" value="Translation proteins SH3-like domain"/>
    <property type="match status" value="1"/>
</dbReference>
<dbReference type="PROSITE" id="PS01275">
    <property type="entry name" value="EFP"/>
    <property type="match status" value="1"/>
</dbReference>
<evidence type="ECO:0000255" key="1">
    <source>
        <dbReference type="HAMAP-Rule" id="MF_00141"/>
    </source>
</evidence>
<proteinExistence type="inferred from homology"/>
<reference key="1">
    <citation type="journal article" date="2009" name="Infect. Immun.">
        <title>Comparative genomics reveal extensive transposon-mediated genomic plasticity and diversity among potential effector proteins within the genus Coxiella.</title>
        <authorList>
            <person name="Beare P.A."/>
            <person name="Unsworth N."/>
            <person name="Andoh M."/>
            <person name="Voth D.E."/>
            <person name="Omsland A."/>
            <person name="Gilk S.D."/>
            <person name="Williams K.P."/>
            <person name="Sobral B.W."/>
            <person name="Kupko J.J. III"/>
            <person name="Porcella S.F."/>
            <person name="Samuel J.E."/>
            <person name="Heinzen R.A."/>
        </authorList>
    </citation>
    <scope>NUCLEOTIDE SEQUENCE [LARGE SCALE GENOMIC DNA]</scope>
    <source>
        <strain>CbuK_Q154</strain>
    </source>
</reference>
<comment type="function">
    <text evidence="1">Involved in peptide bond synthesis. Alleviates ribosome stalling that occurs when 3 or more consecutive Pro residues or the sequence PPG is present in a protein, possibly by augmenting the peptidyl transferase activity of the ribosome. Modification of Lys-34 is required for alleviation.</text>
</comment>
<comment type="pathway">
    <text evidence="1">Protein biosynthesis; polypeptide chain elongation.</text>
</comment>
<comment type="subcellular location">
    <subcellularLocation>
        <location evidence="1">Cytoplasm</location>
    </subcellularLocation>
</comment>
<comment type="PTM">
    <text evidence="1">May be beta-lysylated on the epsilon-amino group of Lys-34 by the combined action of EpmA and EpmB, and then hydroxylated on the C5 position of the same residue by EpmC (if this protein is present). Lysylation is critical for the stimulatory effect of EF-P on peptide-bond formation. The lysylation moiety may extend toward the peptidyltransferase center and stabilize the terminal 3-CCA end of the tRNA. Hydroxylation of the C5 position on Lys-34 may allow additional potential stabilizing hydrogen-bond interactions with the P-tRNA.</text>
</comment>
<comment type="similarity">
    <text evidence="1">Belongs to the elongation factor P family.</text>
</comment>
<organism>
    <name type="scientific">Coxiella burnetii (strain CbuK_Q154)</name>
    <name type="common">Coxiella burnetii (strain Q154)</name>
    <dbReference type="NCBI Taxonomy" id="434924"/>
    <lineage>
        <taxon>Bacteria</taxon>
        <taxon>Pseudomonadati</taxon>
        <taxon>Pseudomonadota</taxon>
        <taxon>Gammaproteobacteria</taxon>
        <taxon>Legionellales</taxon>
        <taxon>Coxiellaceae</taxon>
        <taxon>Coxiella</taxon>
    </lineage>
</organism>
<keyword id="KW-0963">Cytoplasm</keyword>
<keyword id="KW-0251">Elongation factor</keyword>
<keyword id="KW-0379">Hydroxylation</keyword>
<keyword id="KW-0648">Protein biosynthesis</keyword>
<feature type="chain" id="PRO_1000096142" description="Elongation factor P">
    <location>
        <begin position="1"/>
        <end position="188"/>
    </location>
</feature>
<feature type="modified residue" description="N6-(3,6-diaminohexanoyl)-5-hydroxylysine" evidence="1">
    <location>
        <position position="34"/>
    </location>
</feature>
<name>EFP_COXB1</name>
<accession>B6J9B6</accession>
<sequence>MATHSTNEFRGGLKVMVDGDPCSIIDNEFVKPGKGQAFNRVKFRNLKTGRVLERTFKSGETLPAADVVEVEMQYSYNDGEFWHFMTSENYEQHAASKEAVAEAKQWLKEEALCMVTMWNGVPLSVEPPNFVELKITETEPGVRGDTATGGTKRAKLETGAVVRVPLFLNEGEIIKVDTRRGEYVSRAK</sequence>
<protein>
    <recommendedName>
        <fullName evidence="1">Elongation factor P</fullName>
        <shortName evidence="1">EF-P</shortName>
    </recommendedName>
</protein>